<name>RS19_ALIFM</name>
<proteinExistence type="inferred from homology"/>
<dbReference type="EMBL" id="CP001139">
    <property type="protein sequence ID" value="ACH65081.1"/>
    <property type="molecule type" value="Genomic_DNA"/>
</dbReference>
<dbReference type="RefSeq" id="WP_005417232.1">
    <property type="nucleotide sequence ID" value="NC_011184.1"/>
</dbReference>
<dbReference type="SMR" id="B5FG13"/>
<dbReference type="GeneID" id="54162862"/>
<dbReference type="KEGG" id="vfm:VFMJ11_0229"/>
<dbReference type="HOGENOM" id="CLU_144911_0_1_6"/>
<dbReference type="Proteomes" id="UP000001857">
    <property type="component" value="Chromosome I"/>
</dbReference>
<dbReference type="GO" id="GO:0005737">
    <property type="term" value="C:cytoplasm"/>
    <property type="evidence" value="ECO:0007669"/>
    <property type="project" value="UniProtKB-ARBA"/>
</dbReference>
<dbReference type="GO" id="GO:0015935">
    <property type="term" value="C:small ribosomal subunit"/>
    <property type="evidence" value="ECO:0007669"/>
    <property type="project" value="InterPro"/>
</dbReference>
<dbReference type="GO" id="GO:0019843">
    <property type="term" value="F:rRNA binding"/>
    <property type="evidence" value="ECO:0007669"/>
    <property type="project" value="UniProtKB-UniRule"/>
</dbReference>
<dbReference type="GO" id="GO:0003735">
    <property type="term" value="F:structural constituent of ribosome"/>
    <property type="evidence" value="ECO:0007669"/>
    <property type="project" value="InterPro"/>
</dbReference>
<dbReference type="GO" id="GO:0000028">
    <property type="term" value="P:ribosomal small subunit assembly"/>
    <property type="evidence" value="ECO:0007669"/>
    <property type="project" value="TreeGrafter"/>
</dbReference>
<dbReference type="GO" id="GO:0006412">
    <property type="term" value="P:translation"/>
    <property type="evidence" value="ECO:0007669"/>
    <property type="project" value="UniProtKB-UniRule"/>
</dbReference>
<dbReference type="FunFam" id="3.30.860.10:FF:000001">
    <property type="entry name" value="30S ribosomal protein S19"/>
    <property type="match status" value="1"/>
</dbReference>
<dbReference type="Gene3D" id="3.30.860.10">
    <property type="entry name" value="30s Ribosomal Protein S19, Chain A"/>
    <property type="match status" value="1"/>
</dbReference>
<dbReference type="HAMAP" id="MF_00531">
    <property type="entry name" value="Ribosomal_uS19"/>
    <property type="match status" value="1"/>
</dbReference>
<dbReference type="InterPro" id="IPR002222">
    <property type="entry name" value="Ribosomal_uS19"/>
</dbReference>
<dbReference type="InterPro" id="IPR005732">
    <property type="entry name" value="Ribosomal_uS19_bac-type"/>
</dbReference>
<dbReference type="InterPro" id="IPR020934">
    <property type="entry name" value="Ribosomal_uS19_CS"/>
</dbReference>
<dbReference type="InterPro" id="IPR023575">
    <property type="entry name" value="Ribosomal_uS19_SF"/>
</dbReference>
<dbReference type="NCBIfam" id="TIGR01050">
    <property type="entry name" value="rpsS_bact"/>
    <property type="match status" value="1"/>
</dbReference>
<dbReference type="PANTHER" id="PTHR11880">
    <property type="entry name" value="RIBOSOMAL PROTEIN S19P FAMILY MEMBER"/>
    <property type="match status" value="1"/>
</dbReference>
<dbReference type="PANTHER" id="PTHR11880:SF8">
    <property type="entry name" value="SMALL RIBOSOMAL SUBUNIT PROTEIN US19M"/>
    <property type="match status" value="1"/>
</dbReference>
<dbReference type="Pfam" id="PF00203">
    <property type="entry name" value="Ribosomal_S19"/>
    <property type="match status" value="1"/>
</dbReference>
<dbReference type="PIRSF" id="PIRSF002144">
    <property type="entry name" value="Ribosomal_S19"/>
    <property type="match status" value="1"/>
</dbReference>
<dbReference type="PRINTS" id="PR00975">
    <property type="entry name" value="RIBOSOMALS19"/>
</dbReference>
<dbReference type="SUPFAM" id="SSF54570">
    <property type="entry name" value="Ribosomal protein S19"/>
    <property type="match status" value="1"/>
</dbReference>
<dbReference type="PROSITE" id="PS00323">
    <property type="entry name" value="RIBOSOMAL_S19"/>
    <property type="match status" value="1"/>
</dbReference>
<gene>
    <name evidence="1" type="primary">rpsS</name>
    <name type="ordered locus">VFMJ11_0229</name>
</gene>
<accession>B5FG13</accession>
<comment type="function">
    <text evidence="1">Protein S19 forms a complex with S13 that binds strongly to the 16S ribosomal RNA.</text>
</comment>
<comment type="similarity">
    <text evidence="1">Belongs to the universal ribosomal protein uS19 family.</text>
</comment>
<feature type="chain" id="PRO_1000128056" description="Small ribosomal subunit protein uS19">
    <location>
        <begin position="1"/>
        <end position="92"/>
    </location>
</feature>
<keyword id="KW-0687">Ribonucleoprotein</keyword>
<keyword id="KW-0689">Ribosomal protein</keyword>
<keyword id="KW-0694">RNA-binding</keyword>
<keyword id="KW-0699">rRNA-binding</keyword>
<organism>
    <name type="scientific">Aliivibrio fischeri (strain MJ11)</name>
    <name type="common">Vibrio fischeri</name>
    <dbReference type="NCBI Taxonomy" id="388396"/>
    <lineage>
        <taxon>Bacteria</taxon>
        <taxon>Pseudomonadati</taxon>
        <taxon>Pseudomonadota</taxon>
        <taxon>Gammaproteobacteria</taxon>
        <taxon>Vibrionales</taxon>
        <taxon>Vibrionaceae</taxon>
        <taxon>Aliivibrio</taxon>
    </lineage>
</organism>
<protein>
    <recommendedName>
        <fullName evidence="1">Small ribosomal subunit protein uS19</fullName>
    </recommendedName>
    <alternativeName>
        <fullName evidence="2">30S ribosomal protein S19</fullName>
    </alternativeName>
</protein>
<sequence length="92" mass="10470">MPRSLKKGPFIDLHLLKKVEKAVESGDKKPVKTWSRRSMIIPTMINLTIAVHNGRQHVPVFVTEDMIGHKLGEFAPTRTYRGHAADKKAKKR</sequence>
<reference key="1">
    <citation type="submission" date="2008-08" db="EMBL/GenBank/DDBJ databases">
        <title>Complete sequence of Vibrio fischeri strain MJ11.</title>
        <authorList>
            <person name="Mandel M.J."/>
            <person name="Stabb E.V."/>
            <person name="Ruby E.G."/>
            <person name="Ferriera S."/>
            <person name="Johnson J."/>
            <person name="Kravitz S."/>
            <person name="Beeson K."/>
            <person name="Sutton G."/>
            <person name="Rogers Y.-H."/>
            <person name="Friedman R."/>
            <person name="Frazier M."/>
            <person name="Venter J.C."/>
        </authorList>
    </citation>
    <scope>NUCLEOTIDE SEQUENCE [LARGE SCALE GENOMIC DNA]</scope>
    <source>
        <strain>MJ11</strain>
    </source>
</reference>
<evidence type="ECO:0000255" key="1">
    <source>
        <dbReference type="HAMAP-Rule" id="MF_00531"/>
    </source>
</evidence>
<evidence type="ECO:0000305" key="2"/>